<dbReference type="EC" id="1.1.1.21" evidence="3"/>
<dbReference type="EC" id="1.1.1.300" evidence="3"/>
<dbReference type="EC" id="1.1.1.372" evidence="3"/>
<dbReference type="EC" id="1.1.1.54" evidence="3"/>
<dbReference type="EMBL" id="L14950">
    <property type="protein sequence ID" value="AAA30989.1"/>
    <property type="molecule type" value="mRNA"/>
</dbReference>
<dbReference type="EMBL" id="U46065">
    <property type="protein sequence ID" value="AAC48515.1"/>
    <property type="molecule type" value="mRNA"/>
</dbReference>
<dbReference type="PIR" id="A59021">
    <property type="entry name" value="A59021"/>
</dbReference>
<dbReference type="RefSeq" id="NP_001001539.1">
    <property type="nucleotide sequence ID" value="NM_001001539.2"/>
</dbReference>
<dbReference type="PDB" id="1AH0">
    <property type="method" value="X-ray"/>
    <property type="resolution" value="2.30 A"/>
    <property type="chains" value="A=2-316"/>
</dbReference>
<dbReference type="PDB" id="1AH3">
    <property type="method" value="X-ray"/>
    <property type="resolution" value="2.30 A"/>
    <property type="chains" value="A=2-316"/>
</dbReference>
<dbReference type="PDB" id="1AH4">
    <property type="method" value="X-ray"/>
    <property type="resolution" value="2.00 A"/>
    <property type="chains" value="A=2-316"/>
</dbReference>
<dbReference type="PDB" id="1DLA">
    <property type="method" value="X-ray"/>
    <property type="resolution" value="3.00 A"/>
    <property type="chains" value="A/B/C/D=3-316"/>
</dbReference>
<dbReference type="PDB" id="1EKO">
    <property type="method" value="X-ray"/>
    <property type="resolution" value="2.20 A"/>
    <property type="chains" value="A=2-316"/>
</dbReference>
<dbReference type="PDBsum" id="1AH0"/>
<dbReference type="PDBsum" id="1AH3"/>
<dbReference type="PDBsum" id="1AH4"/>
<dbReference type="PDBsum" id="1DLA"/>
<dbReference type="PDBsum" id="1EKO"/>
<dbReference type="SMR" id="P80276"/>
<dbReference type="FunCoup" id="P80276">
    <property type="interactions" value="1494"/>
</dbReference>
<dbReference type="STRING" id="9823.ENSSSCP00000064633"/>
<dbReference type="BindingDB" id="P80276"/>
<dbReference type="ChEMBL" id="CHEMBL4559"/>
<dbReference type="DrugCentral" id="P80276"/>
<dbReference type="iPTMnet" id="P80276"/>
<dbReference type="PaxDb" id="9823-ENSSSCP00000017525"/>
<dbReference type="PeptideAtlas" id="P80276"/>
<dbReference type="GeneID" id="396816"/>
<dbReference type="KEGG" id="ssc:396816"/>
<dbReference type="CTD" id="231"/>
<dbReference type="eggNOG" id="KOG1577">
    <property type="taxonomic scope" value="Eukaryota"/>
</dbReference>
<dbReference type="HOGENOM" id="CLU_023205_0_0_1"/>
<dbReference type="InParanoid" id="P80276"/>
<dbReference type="OrthoDB" id="416253at2759"/>
<dbReference type="TreeFam" id="TF106492"/>
<dbReference type="SABIO-RK" id="P80276"/>
<dbReference type="EvolutionaryTrace" id="P80276"/>
<dbReference type="PRO" id="PR:P80276"/>
<dbReference type="Proteomes" id="UP000008227">
    <property type="component" value="Unplaced"/>
</dbReference>
<dbReference type="Proteomes" id="UP000314985">
    <property type="component" value="Unplaced"/>
</dbReference>
<dbReference type="Proteomes" id="UP000694570">
    <property type="component" value="Unplaced"/>
</dbReference>
<dbReference type="Proteomes" id="UP000694571">
    <property type="component" value="Unplaced"/>
</dbReference>
<dbReference type="Proteomes" id="UP000694720">
    <property type="component" value="Unplaced"/>
</dbReference>
<dbReference type="Proteomes" id="UP000694722">
    <property type="component" value="Unplaced"/>
</dbReference>
<dbReference type="Proteomes" id="UP000694723">
    <property type="component" value="Unplaced"/>
</dbReference>
<dbReference type="Proteomes" id="UP000694724">
    <property type="component" value="Unplaced"/>
</dbReference>
<dbReference type="Proteomes" id="UP000694725">
    <property type="component" value="Unplaced"/>
</dbReference>
<dbReference type="Proteomes" id="UP000694726">
    <property type="component" value="Unplaced"/>
</dbReference>
<dbReference type="Proteomes" id="UP000694727">
    <property type="component" value="Unplaced"/>
</dbReference>
<dbReference type="Proteomes" id="UP000694728">
    <property type="component" value="Unplaced"/>
</dbReference>
<dbReference type="GO" id="GO:0005829">
    <property type="term" value="C:cytosol"/>
    <property type="evidence" value="ECO:0000318"/>
    <property type="project" value="GO_Central"/>
</dbReference>
<dbReference type="GO" id="GO:0004032">
    <property type="term" value="F:aldose reductase (NADPH) activity"/>
    <property type="evidence" value="ECO:0000318"/>
    <property type="project" value="GO_Central"/>
</dbReference>
<dbReference type="GO" id="GO:0052650">
    <property type="term" value="F:all-trans-retinol dehydrogenase (NADP+) activity"/>
    <property type="evidence" value="ECO:0007669"/>
    <property type="project" value="UniProtKB-EC"/>
</dbReference>
<dbReference type="GO" id="GO:0047655">
    <property type="term" value="F:allyl-alcohol dehydrogenase activity"/>
    <property type="evidence" value="ECO:0007669"/>
    <property type="project" value="UniProtKB-EC"/>
</dbReference>
<dbReference type="GO" id="GO:0047956">
    <property type="term" value="F:glycerol dehydrogenase (NADP+) activity"/>
    <property type="evidence" value="ECO:0007669"/>
    <property type="project" value="RHEA"/>
</dbReference>
<dbReference type="GO" id="GO:0036130">
    <property type="term" value="F:prostaglandin H2 endoperoxidase reductase activity"/>
    <property type="evidence" value="ECO:0007669"/>
    <property type="project" value="RHEA"/>
</dbReference>
<dbReference type="GO" id="GO:0001758">
    <property type="term" value="F:retinal dehydrogenase activity"/>
    <property type="evidence" value="ECO:0000250"/>
    <property type="project" value="UniProtKB"/>
</dbReference>
<dbReference type="GO" id="GO:0001523">
    <property type="term" value="P:retinoid metabolic process"/>
    <property type="evidence" value="ECO:0000250"/>
    <property type="project" value="UniProtKB"/>
</dbReference>
<dbReference type="CDD" id="cd19107">
    <property type="entry name" value="AKR_AKR1B1-19"/>
    <property type="match status" value="1"/>
</dbReference>
<dbReference type="FunFam" id="3.20.20.100:FF:000009">
    <property type="entry name" value="Aldo-keto reductase family 1 member B1"/>
    <property type="match status" value="1"/>
</dbReference>
<dbReference type="Gene3D" id="3.20.20.100">
    <property type="entry name" value="NADP-dependent oxidoreductase domain"/>
    <property type="match status" value="1"/>
</dbReference>
<dbReference type="InterPro" id="IPR020471">
    <property type="entry name" value="AKR"/>
</dbReference>
<dbReference type="InterPro" id="IPR018170">
    <property type="entry name" value="Aldo/ket_reductase_CS"/>
</dbReference>
<dbReference type="InterPro" id="IPR023210">
    <property type="entry name" value="NADP_OxRdtase_dom"/>
</dbReference>
<dbReference type="InterPro" id="IPR036812">
    <property type="entry name" value="NADP_OxRdtase_dom_sf"/>
</dbReference>
<dbReference type="PANTHER" id="PTHR11732">
    <property type="entry name" value="ALDO/KETO REDUCTASE"/>
    <property type="match status" value="1"/>
</dbReference>
<dbReference type="Pfam" id="PF00248">
    <property type="entry name" value="Aldo_ket_red"/>
    <property type="match status" value="1"/>
</dbReference>
<dbReference type="PIRSF" id="PIRSF000097">
    <property type="entry name" value="AKR"/>
    <property type="match status" value="1"/>
</dbReference>
<dbReference type="PRINTS" id="PR00069">
    <property type="entry name" value="ALDKETRDTASE"/>
</dbReference>
<dbReference type="SUPFAM" id="SSF51430">
    <property type="entry name" value="NAD(P)-linked oxidoreductase"/>
    <property type="match status" value="1"/>
</dbReference>
<dbReference type="PROSITE" id="PS00798">
    <property type="entry name" value="ALDOKETO_REDUCTASE_1"/>
    <property type="match status" value="1"/>
</dbReference>
<dbReference type="PROSITE" id="PS00062">
    <property type="entry name" value="ALDOKETO_REDUCTASE_2"/>
    <property type="match status" value="1"/>
</dbReference>
<dbReference type="PROSITE" id="PS00063">
    <property type="entry name" value="ALDOKETO_REDUCTASE_3"/>
    <property type="match status" value="1"/>
</dbReference>
<accession>P80276</accession>
<organism>
    <name type="scientific">Sus scrofa</name>
    <name type="common">Pig</name>
    <dbReference type="NCBI Taxonomy" id="9823"/>
    <lineage>
        <taxon>Eukaryota</taxon>
        <taxon>Metazoa</taxon>
        <taxon>Chordata</taxon>
        <taxon>Craniata</taxon>
        <taxon>Vertebrata</taxon>
        <taxon>Euteleostomi</taxon>
        <taxon>Mammalia</taxon>
        <taxon>Eutheria</taxon>
        <taxon>Laurasiatheria</taxon>
        <taxon>Artiodactyla</taxon>
        <taxon>Suina</taxon>
        <taxon>Suidae</taxon>
        <taxon>Sus</taxon>
    </lineage>
</organism>
<sequence length="316" mass="35868">MASHLVLYTGAKMPILGLGTWKSPPGKVTEAVKVAIDLGYRHIDCAHVYQNENEVGLGLQEKLQGQVVKREDLFIVSKLWCTDHEKNLVKGACQTTLRDLKLDYLDLYLIHWPTGFKPGKDPFPLDGDGNVVPDESDFVETWEAMEELVDEGLVKAIGVSNFNHLQVEKILNKPGLKYKPAVNQIEVHPYLTQEKLIEYCKSKGIVVTAYSPLGSPDRPWAKPEDPSLLEDPRIKAIAAKYNKTTAQVLIRFPMQRNLIVIPKSVTPERIAENFQVFDFELSPEDMNTLLSYNRNWRVCALMSCASHKDYPFHEEY</sequence>
<protein>
    <recommendedName>
        <fullName>Aldo-keto reductase family 1 member B1</fullName>
        <ecNumber evidence="3">1.1.1.21</ecNumber>
        <ecNumber evidence="3">1.1.1.300</ecNumber>
        <ecNumber evidence="3">1.1.1.372</ecNumber>
        <ecNumber evidence="3">1.1.1.54</ecNumber>
    </recommendedName>
    <alternativeName>
        <fullName>Aldehyde reductase</fullName>
    </alternativeName>
    <alternativeName>
        <fullName>Aldose reductase</fullName>
        <shortName>AR</shortName>
    </alternativeName>
</protein>
<feature type="initiator methionine" description="Removed" evidence="5">
    <location>
        <position position="1"/>
    </location>
</feature>
<feature type="chain" id="PRO_0000124625" description="Aldo-keto reductase family 1 member B1">
    <location>
        <begin position="2"/>
        <end position="316"/>
    </location>
</feature>
<feature type="active site" description="Proton donor" evidence="3">
    <location>
        <position position="49"/>
    </location>
</feature>
<feature type="binding site" evidence="4">
    <location>
        <begin position="10"/>
        <end position="19"/>
    </location>
    <ligand>
        <name>NADP(+)</name>
        <dbReference type="ChEBI" id="CHEBI:58349"/>
    </ligand>
</feature>
<feature type="binding site">
    <location>
        <position position="111"/>
    </location>
    <ligand>
        <name>substrate</name>
    </ligand>
</feature>
<feature type="binding site" evidence="3">
    <location>
        <begin position="211"/>
        <end position="273"/>
    </location>
    <ligand>
        <name>NADP(+)</name>
        <dbReference type="ChEBI" id="CHEBI:58349"/>
    </ligand>
</feature>
<feature type="site" description="Lowers pKa of active site Tyr" evidence="1">
    <location>
        <position position="78"/>
    </location>
</feature>
<feature type="modified residue" description="N-acetylalanine" evidence="5">
    <location>
        <position position="2"/>
    </location>
</feature>
<feature type="modified residue" description="Phosphoserine" evidence="2">
    <location>
        <position position="3"/>
    </location>
</feature>
<feature type="modified residue" description="N6-acetyllysine" evidence="3">
    <location>
        <position position="222"/>
    </location>
</feature>
<feature type="modified residue" description="N6-acetyllysine" evidence="3">
    <location>
        <position position="263"/>
    </location>
</feature>
<feature type="sequence conflict" description="In Ref. 1; AAA30989/AAC48515." evidence="6" ref="1">
    <original>D</original>
    <variation>N</variation>
    <location>
        <position position="99"/>
    </location>
</feature>
<feature type="strand" evidence="8">
    <location>
        <begin position="4"/>
        <end position="6"/>
    </location>
</feature>
<feature type="strand" evidence="8">
    <location>
        <begin position="12"/>
        <end position="16"/>
    </location>
</feature>
<feature type="helix" evidence="8">
    <location>
        <begin position="25"/>
        <end position="38"/>
    </location>
</feature>
<feature type="strand" evidence="8">
    <location>
        <begin position="42"/>
        <end position="44"/>
    </location>
</feature>
<feature type="helix" evidence="8">
    <location>
        <begin position="47"/>
        <end position="49"/>
    </location>
</feature>
<feature type="helix" evidence="8">
    <location>
        <begin position="52"/>
        <end position="64"/>
    </location>
</feature>
<feature type="helix" evidence="8">
    <location>
        <begin position="70"/>
        <end position="72"/>
    </location>
</feature>
<feature type="strand" evidence="8">
    <location>
        <begin position="74"/>
        <end position="79"/>
    </location>
</feature>
<feature type="helix" evidence="8">
    <location>
        <begin position="81"/>
        <end position="83"/>
    </location>
</feature>
<feature type="helix" evidence="8">
    <location>
        <begin position="86"/>
        <end position="88"/>
    </location>
</feature>
<feature type="helix" evidence="8">
    <location>
        <begin position="89"/>
        <end position="100"/>
    </location>
</feature>
<feature type="strand" evidence="8">
    <location>
        <begin position="105"/>
        <end position="110"/>
    </location>
</feature>
<feature type="strand" evidence="9">
    <location>
        <begin position="118"/>
        <end position="120"/>
    </location>
</feature>
<feature type="strand" evidence="8">
    <location>
        <begin position="129"/>
        <end position="131"/>
    </location>
</feature>
<feature type="helix" evidence="8">
    <location>
        <begin position="138"/>
        <end position="150"/>
    </location>
</feature>
<feature type="strand" evidence="8">
    <location>
        <begin position="153"/>
        <end position="155"/>
    </location>
</feature>
<feature type="strand" evidence="8">
    <location>
        <begin position="157"/>
        <end position="161"/>
    </location>
</feature>
<feature type="helix" evidence="8">
    <location>
        <begin position="164"/>
        <end position="171"/>
    </location>
</feature>
<feature type="strand" evidence="8">
    <location>
        <begin position="181"/>
        <end position="186"/>
    </location>
</feature>
<feature type="helix" evidence="8">
    <location>
        <begin position="194"/>
        <end position="203"/>
    </location>
</feature>
<feature type="strand" evidence="8">
    <location>
        <begin position="206"/>
        <end position="210"/>
    </location>
</feature>
<feature type="strand" evidence="7">
    <location>
        <begin position="223"/>
        <end position="225"/>
    </location>
</feature>
<feature type="helix" evidence="8">
    <location>
        <begin position="228"/>
        <end position="230"/>
    </location>
</feature>
<feature type="helix" evidence="8">
    <location>
        <begin position="232"/>
        <end position="241"/>
    </location>
</feature>
<feature type="helix" evidence="8">
    <location>
        <begin position="245"/>
        <end position="255"/>
    </location>
</feature>
<feature type="helix" evidence="8">
    <location>
        <begin position="267"/>
        <end position="272"/>
    </location>
</feature>
<feature type="turn" evidence="8">
    <location>
        <begin position="273"/>
        <end position="278"/>
    </location>
</feature>
<feature type="helix" evidence="8">
    <location>
        <begin position="283"/>
        <end position="290"/>
    </location>
</feature>
<feature type="helix" evidence="8">
    <location>
        <begin position="302"/>
        <end position="304"/>
    </location>
</feature>
<feature type="helix" evidence="8">
    <location>
        <begin position="311"/>
        <end position="313"/>
    </location>
</feature>
<reference key="1">
    <citation type="journal article" date="1993" name="Adv. Exp. Med. Biol.">
        <title>Location of an essential arginine residue in the primary structure of pig aldose reductase.</title>
        <authorList>
            <person name="Kubiseski T.J."/>
            <person name="Green N.C."/>
            <person name="Flynn T.G."/>
        </authorList>
    </citation>
    <scope>NUCLEOTIDE SEQUENCE [MRNA]</scope>
    <source>
        <tissue>Brain</tissue>
    </source>
</reference>
<reference key="2">
    <citation type="journal article" date="1993" name="Eur. J. Biochem.">
        <title>Sequence of pig lens aldose reductase and electrospray mass spectrometry of non-covalent and covalent complexes.</title>
        <authorList>
            <person name="Jaquinod M."/>
            <person name="Potier N."/>
            <person name="Klarskov K."/>
            <person name="Reymann J.-M."/>
            <person name="Sorokine O."/>
            <person name="Kieffer S."/>
            <person name="Barth P."/>
            <person name="Andriantomanga V."/>
            <person name="Biellmann J.-F."/>
            <person name="van Dorsselaer A."/>
        </authorList>
    </citation>
    <scope>PROTEIN SEQUENCE OF 2-316</scope>
    <scope>ACETYLATION AT ALA-2</scope>
    <scope>MASS SPECTROMETRY</scope>
    <source>
        <tissue>Lens</tissue>
    </source>
</reference>
<reference key="3">
    <citation type="journal article" date="1992" name="Nature">
        <title>Novel NADPH-binding domain revealed by the crystal structure of aldose reductase.</title>
        <authorList>
            <person name="Rondeau J.-M."/>
            <person name="Tete-Favier F."/>
            <person name="Podjarny A."/>
            <person name="Reymann J.-M."/>
            <person name="Barth P."/>
            <person name="Biellmann J.-F."/>
            <person name="Moras D."/>
        </authorList>
    </citation>
    <scope>X-RAY CRYSTALLOGRAPHY (2.5 ANGSTROMS)</scope>
</reference>
<reference key="4">
    <citation type="journal article" date="1997" name="Structure">
        <title>A 'specificity' pocket inferred from the crystal structures of the complexes of aldose reductase with the pharmaceutically important inhibitors tolrestat and sorbinil.</title>
        <authorList>
            <person name="Urzhumtsev A."/>
            <person name="Tete-Favier F."/>
            <person name="Mitschler A."/>
            <person name="Barbanton J."/>
            <person name="Barth P."/>
            <person name="Urzhumtseva L."/>
            <person name="Biellmann J.-F."/>
            <person name="Podjarny A.D."/>
            <person name="Moras D."/>
        </authorList>
    </citation>
    <scope>X-RAY CRYSTALLOGRAPHY (2.3 ANGSTROMS)</scope>
</reference>
<comment type="function">
    <text evidence="3">Catalyzes the NADPH-dependent reduction of a wide variety of carbonyl-containing compounds to their corresponding alcohols. Displays enzymatic activity towards endogenous metabolites such as aromatic and aliphatic aldehydes, ketones, monosacharides, bile acids and xenobiotics substrates. Key enzyme in the polyol pathway, catalyzes reduction of glucose to sorbitol during hyperglycemia. Reduces steroids and their derivatives and prostaglandins. Displays low enzymatic activity toward all-trans-retinal, 9-cis-retinal, and 13-cis-retinal. Catalyzes the reduction of diverse phospholipid aldehydes such as 1-palmitoyl-2-(5-oxovaleroyl)-sn -glycero-3-phosphoethanolamin (POVPC) and related phospholipid aldehydes that are generated from the oxydation of phosphotidylcholine and phosphatdyleethanolamides. Plays a role in detoxifying dietary and lipid-derived unsaturated carbonyls, such as crotonaldehyde, 4-hydroxynonenal, trans-2-hexenal, trans-2,4-hexadienal and their glutathione-conjugates carbonyls (GS-carbonyls).</text>
</comment>
<comment type="catalytic activity">
    <reaction evidence="3">
        <text>an alditol + NADP(+) = an aldose + NADPH + H(+)</text>
        <dbReference type="Rhea" id="RHEA:12789"/>
        <dbReference type="Rhea" id="RHEA-COMP:9554"/>
        <dbReference type="Rhea" id="RHEA-COMP:9555"/>
        <dbReference type="ChEBI" id="CHEBI:15378"/>
        <dbReference type="ChEBI" id="CHEBI:15693"/>
        <dbReference type="ChEBI" id="CHEBI:17522"/>
        <dbReference type="ChEBI" id="CHEBI:57783"/>
        <dbReference type="ChEBI" id="CHEBI:58349"/>
        <dbReference type="EC" id="1.1.1.21"/>
    </reaction>
</comment>
<comment type="catalytic activity">
    <reaction evidence="3">
        <text>all-trans-retinol + NADP(+) = all-trans-retinal + NADPH + H(+)</text>
        <dbReference type="Rhea" id="RHEA:25033"/>
        <dbReference type="ChEBI" id="CHEBI:15378"/>
        <dbReference type="ChEBI" id="CHEBI:17336"/>
        <dbReference type="ChEBI" id="CHEBI:17898"/>
        <dbReference type="ChEBI" id="CHEBI:57783"/>
        <dbReference type="ChEBI" id="CHEBI:58349"/>
        <dbReference type="EC" id="1.1.1.300"/>
    </reaction>
</comment>
<comment type="catalytic activity">
    <reaction evidence="3">
        <text>9-cis-retinol + NADP(+) = 9-cis-retinal + NADPH + H(+)</text>
        <dbReference type="Rhea" id="RHEA:54916"/>
        <dbReference type="ChEBI" id="CHEBI:15378"/>
        <dbReference type="ChEBI" id="CHEBI:57783"/>
        <dbReference type="ChEBI" id="CHEBI:58349"/>
        <dbReference type="ChEBI" id="CHEBI:78272"/>
        <dbReference type="ChEBI" id="CHEBI:78273"/>
    </reaction>
</comment>
<comment type="catalytic activity">
    <reaction evidence="3">
        <text>13-cis-retinol + NADP(+) = 13-cis-retinal + NADPH + H(+)</text>
        <dbReference type="Rhea" id="RHEA:54920"/>
        <dbReference type="ChEBI" id="CHEBI:15378"/>
        <dbReference type="ChEBI" id="CHEBI:45479"/>
        <dbReference type="ChEBI" id="CHEBI:45487"/>
        <dbReference type="ChEBI" id="CHEBI:57783"/>
        <dbReference type="ChEBI" id="CHEBI:58349"/>
    </reaction>
</comment>
<comment type="catalytic activity">
    <reaction evidence="3">
        <text>glycerol + NADP(+) = D-glyceraldehyde + NADPH + H(+)</text>
        <dbReference type="Rhea" id="RHEA:23592"/>
        <dbReference type="ChEBI" id="CHEBI:15378"/>
        <dbReference type="ChEBI" id="CHEBI:17378"/>
        <dbReference type="ChEBI" id="CHEBI:17754"/>
        <dbReference type="ChEBI" id="CHEBI:57783"/>
        <dbReference type="ChEBI" id="CHEBI:58349"/>
        <dbReference type="EC" id="1.1.1.372"/>
    </reaction>
</comment>
<comment type="catalytic activity">
    <reaction evidence="3">
        <text>glycerol + NADP(+) = L-glyceraldehyde + NADPH + H(+)</text>
        <dbReference type="Rhea" id="RHEA:38111"/>
        <dbReference type="ChEBI" id="CHEBI:15378"/>
        <dbReference type="ChEBI" id="CHEBI:17754"/>
        <dbReference type="ChEBI" id="CHEBI:27975"/>
        <dbReference type="ChEBI" id="CHEBI:57783"/>
        <dbReference type="ChEBI" id="CHEBI:58349"/>
        <dbReference type="EC" id="1.1.1.372"/>
    </reaction>
</comment>
<comment type="catalytic activity">
    <reaction evidence="3">
        <text>prenol + NADP(+) = 3-methyl-2-butenal + NADPH + H(+)</text>
        <dbReference type="Rhea" id="RHEA:58420"/>
        <dbReference type="ChEBI" id="CHEBI:15378"/>
        <dbReference type="ChEBI" id="CHEBI:15825"/>
        <dbReference type="ChEBI" id="CHEBI:16019"/>
        <dbReference type="ChEBI" id="CHEBI:57783"/>
        <dbReference type="ChEBI" id="CHEBI:58349"/>
    </reaction>
</comment>
<comment type="catalytic activity">
    <reaction evidence="3">
        <text>(E)-hex-2-en-1-ol + NADP(+) = (E)-hex-2-enal + NADPH + H(+)</text>
        <dbReference type="Rhea" id="RHEA:58424"/>
        <dbReference type="ChEBI" id="CHEBI:15378"/>
        <dbReference type="ChEBI" id="CHEBI:28913"/>
        <dbReference type="ChEBI" id="CHEBI:57783"/>
        <dbReference type="ChEBI" id="CHEBI:58349"/>
        <dbReference type="ChEBI" id="CHEBI:141205"/>
    </reaction>
</comment>
<comment type="catalytic activity">
    <reaction evidence="3">
        <text>(E,E)-2,4-hexadien-1-ol + NADP(+) = (E,E)-2,4-hexadienal + NADPH + H(+)</text>
        <dbReference type="Rhea" id="RHEA:58428"/>
        <dbReference type="ChEBI" id="CHEBI:15378"/>
        <dbReference type="ChEBI" id="CHEBI:57783"/>
        <dbReference type="ChEBI" id="CHEBI:58349"/>
        <dbReference type="ChEBI" id="CHEBI:82334"/>
        <dbReference type="ChEBI" id="CHEBI:142625"/>
    </reaction>
</comment>
<comment type="catalytic activity">
    <reaction evidence="3">
        <text>a 4-hydroxynonen-1-ol + NADP(+) = a 4-hydroxynonenal + NADPH + H(+)</text>
        <dbReference type="Rhea" id="RHEA:58336"/>
        <dbReference type="ChEBI" id="CHEBI:15378"/>
        <dbReference type="ChEBI" id="CHEBI:57783"/>
        <dbReference type="ChEBI" id="CHEBI:58349"/>
        <dbReference type="ChEBI" id="CHEBI:142593"/>
        <dbReference type="ChEBI" id="CHEBI:142606"/>
    </reaction>
</comment>
<comment type="catalytic activity">
    <reaction evidence="3">
        <text>prostaglandin F2alpha + NADP(+) = prostaglandin H2 + NADPH + H(+)</text>
        <dbReference type="Rhea" id="RHEA:45312"/>
        <dbReference type="ChEBI" id="CHEBI:15378"/>
        <dbReference type="ChEBI" id="CHEBI:57404"/>
        <dbReference type="ChEBI" id="CHEBI:57405"/>
        <dbReference type="ChEBI" id="CHEBI:57783"/>
        <dbReference type="ChEBI" id="CHEBI:58349"/>
    </reaction>
</comment>
<comment type="catalytic activity">
    <reaction evidence="3">
        <text>allyl alcohol + NADP(+) = acrolein + NADPH + H(+)</text>
        <dbReference type="Rhea" id="RHEA:12168"/>
        <dbReference type="ChEBI" id="CHEBI:15368"/>
        <dbReference type="ChEBI" id="CHEBI:15378"/>
        <dbReference type="ChEBI" id="CHEBI:16605"/>
        <dbReference type="ChEBI" id="CHEBI:57783"/>
        <dbReference type="ChEBI" id="CHEBI:58349"/>
        <dbReference type="EC" id="1.1.1.54"/>
    </reaction>
</comment>
<comment type="catalytic activity">
    <reaction evidence="3">
        <text>pyridine 3-methanol + NADP(+) = pyridine-3-carbaldehyde + NADPH + H(+)</text>
        <dbReference type="Rhea" id="RHEA:58776"/>
        <dbReference type="ChEBI" id="CHEBI:15378"/>
        <dbReference type="ChEBI" id="CHEBI:28345"/>
        <dbReference type="ChEBI" id="CHEBI:45213"/>
        <dbReference type="ChEBI" id="CHEBI:57783"/>
        <dbReference type="ChEBI" id="CHEBI:58349"/>
    </reaction>
</comment>
<comment type="catalytic activity">
    <reaction evidence="3">
        <text>1-hexadecanoyl-2-(5-oxopentanoyl)-sn-glycero-3-phosphocholine + NADPH + H(+) = 1-hexadecanoyl-2-(5-hydroxypentanoyl)-sn-glycero-3-phosphocholine + NADP(+)</text>
        <dbReference type="Rhea" id="RHEA:58512"/>
        <dbReference type="ChEBI" id="CHEBI:15378"/>
        <dbReference type="ChEBI" id="CHEBI:57783"/>
        <dbReference type="ChEBI" id="CHEBI:58349"/>
        <dbReference type="ChEBI" id="CHEBI:77890"/>
        <dbReference type="ChEBI" id="CHEBI:142747"/>
    </reaction>
</comment>
<comment type="catalytic activity">
    <reaction evidence="3">
        <text>1-hexadecanoyl-2-(7-oxoheptanoyl)-sn-glycero-3-phosphocholine + NADPH + H(+) = 1-hexadecanoyl-2-(7-hydroxyheptanoyl)-sn-glycero-3-phosphocholine + NADP(+)</text>
        <dbReference type="Rhea" id="RHEA:58752"/>
        <dbReference type="ChEBI" id="CHEBI:15378"/>
        <dbReference type="ChEBI" id="CHEBI:57783"/>
        <dbReference type="ChEBI" id="CHEBI:58349"/>
        <dbReference type="ChEBI" id="CHEBI:134601"/>
        <dbReference type="ChEBI" id="CHEBI:142748"/>
    </reaction>
</comment>
<comment type="catalytic activity">
    <reaction evidence="3">
        <text>1-hexadecanoyl-2-(9-oxononanoyl)-sn-glycero-3-phosphocholine + NADPH + H(+) = 1-hexadecanoyl-2-(9-hydroxynonanoyl)-sn-glycero-3-phosphocholine + NADP(+)</text>
        <dbReference type="Rhea" id="RHEA:58592"/>
        <dbReference type="ChEBI" id="CHEBI:15378"/>
        <dbReference type="ChEBI" id="CHEBI:57783"/>
        <dbReference type="ChEBI" id="CHEBI:58349"/>
        <dbReference type="ChEBI" id="CHEBI:61042"/>
        <dbReference type="ChEBI" id="CHEBI:142749"/>
    </reaction>
</comment>
<comment type="catalytic activity">
    <reaction evidence="3">
        <text>1-hexadecanoyl-2-(5-oxopentanoyl)-sn-glycero-3-phosphoethanolamine + NADPH + H(+) = 1-hexadecanoyl-2-(5-hydroxypentanoyl)-sn-glycero-3-phosphoethanolamine + NADP(+)</text>
        <dbReference type="Rhea" id="RHEA:58756"/>
        <dbReference type="ChEBI" id="CHEBI:15378"/>
        <dbReference type="ChEBI" id="CHEBI:57783"/>
        <dbReference type="ChEBI" id="CHEBI:58349"/>
        <dbReference type="ChEBI" id="CHEBI:142750"/>
        <dbReference type="ChEBI" id="CHEBI:142751"/>
    </reaction>
</comment>
<comment type="subunit">
    <text evidence="3">Monomer.</text>
</comment>
<comment type="subcellular location">
    <subcellularLocation>
        <location>Cytoplasm</location>
    </subcellularLocation>
</comment>
<comment type="mass spectrometry" mass="35778.0" error="3.0" method="Electrospray" evidence="5"/>
<comment type="similarity">
    <text evidence="6">Belongs to the aldo/keto reductase family.</text>
</comment>
<evidence type="ECO:0000250" key="1"/>
<evidence type="ECO:0000250" key="2">
    <source>
        <dbReference type="UniProtKB" id="P07943"/>
    </source>
</evidence>
<evidence type="ECO:0000250" key="3">
    <source>
        <dbReference type="UniProtKB" id="P15121"/>
    </source>
</evidence>
<evidence type="ECO:0000255" key="4"/>
<evidence type="ECO:0000269" key="5">
    <source>
    </source>
</evidence>
<evidence type="ECO:0000305" key="6"/>
<evidence type="ECO:0007829" key="7">
    <source>
        <dbReference type="PDB" id="1AH0"/>
    </source>
</evidence>
<evidence type="ECO:0007829" key="8">
    <source>
        <dbReference type="PDB" id="1AH4"/>
    </source>
</evidence>
<evidence type="ECO:0007829" key="9">
    <source>
        <dbReference type="PDB" id="1EKO"/>
    </source>
</evidence>
<keyword id="KW-0002">3D-structure</keyword>
<keyword id="KW-0007">Acetylation</keyword>
<keyword id="KW-0963">Cytoplasm</keyword>
<keyword id="KW-0903">Direct protein sequencing</keyword>
<keyword id="KW-0443">Lipid metabolism</keyword>
<keyword id="KW-0521">NADP</keyword>
<keyword id="KW-0560">Oxidoreductase</keyword>
<keyword id="KW-0597">Phosphoprotein</keyword>
<keyword id="KW-1185">Reference proteome</keyword>
<name>ALDR_PIG</name>
<proteinExistence type="evidence at protein level"/>
<gene>
    <name type="primary">AKR1B1</name>
    <name type="synonym">ALR2</name>
</gene>